<name>LYRM1_DANRE</name>
<gene>
    <name type="primary">lyrm1</name>
    <name type="ORF">zgc:92830</name>
</gene>
<reference key="1">
    <citation type="submission" date="2004-07" db="EMBL/GenBank/DDBJ databases">
        <authorList>
            <consortium name="NIH - Zebrafish Gene Collection (ZGC) project"/>
        </authorList>
    </citation>
    <scope>NUCLEOTIDE SEQUENCE [LARGE SCALE MRNA]</scope>
    <source>
        <tissue>Brain</tissue>
    </source>
</reference>
<comment type="similarity">
    <text evidence="2">Belongs to the complex I LYR family.</text>
</comment>
<keyword id="KW-1185">Reference proteome</keyword>
<evidence type="ECO:0000256" key="1">
    <source>
        <dbReference type="SAM" id="MobiDB-lite"/>
    </source>
</evidence>
<evidence type="ECO:0000305" key="2"/>
<protein>
    <recommendedName>
        <fullName>LYR motif containing protein 1</fullName>
    </recommendedName>
</protein>
<proteinExistence type="inferred from homology"/>
<organism>
    <name type="scientific">Danio rerio</name>
    <name type="common">Zebrafish</name>
    <name type="synonym">Brachydanio rerio</name>
    <dbReference type="NCBI Taxonomy" id="7955"/>
    <lineage>
        <taxon>Eukaryota</taxon>
        <taxon>Metazoa</taxon>
        <taxon>Chordata</taxon>
        <taxon>Craniata</taxon>
        <taxon>Vertebrata</taxon>
        <taxon>Euteleostomi</taxon>
        <taxon>Actinopterygii</taxon>
        <taxon>Neopterygii</taxon>
        <taxon>Teleostei</taxon>
        <taxon>Ostariophysi</taxon>
        <taxon>Cypriniformes</taxon>
        <taxon>Danionidae</taxon>
        <taxon>Danioninae</taxon>
        <taxon>Danio</taxon>
    </lineage>
</organism>
<dbReference type="EMBL" id="BC076293">
    <property type="protein sequence ID" value="AAH76293.1"/>
    <property type="molecule type" value="mRNA"/>
</dbReference>
<dbReference type="RefSeq" id="NP_001002506.1">
    <property type="nucleotide sequence ID" value="NM_001002506.1"/>
</dbReference>
<dbReference type="SMR" id="Q6DGP7"/>
<dbReference type="FunCoup" id="Q6DGP7">
    <property type="interactions" value="210"/>
</dbReference>
<dbReference type="STRING" id="7955.ENSDARP00000039061"/>
<dbReference type="PaxDb" id="7955-ENSDARP00000117995"/>
<dbReference type="GeneID" id="436779"/>
<dbReference type="KEGG" id="dre:436779"/>
<dbReference type="AGR" id="ZFIN:ZDB-GENE-040718-210"/>
<dbReference type="CTD" id="57149"/>
<dbReference type="ZFIN" id="ZDB-GENE-040718-210">
    <property type="gene designation" value="lyrm1"/>
</dbReference>
<dbReference type="eggNOG" id="ENOG502S1SM">
    <property type="taxonomic scope" value="Eukaryota"/>
</dbReference>
<dbReference type="InParanoid" id="Q6DGP7"/>
<dbReference type="OrthoDB" id="275715at2759"/>
<dbReference type="PhylomeDB" id="Q6DGP7"/>
<dbReference type="PRO" id="PR:Q6DGP7"/>
<dbReference type="Proteomes" id="UP000000437">
    <property type="component" value="Chromosome 24"/>
</dbReference>
<dbReference type="CDD" id="cd20261">
    <property type="entry name" value="Complex1_LYR_LYRM1"/>
    <property type="match status" value="1"/>
</dbReference>
<dbReference type="InterPro" id="IPR008011">
    <property type="entry name" value="Complex1_LYR_dom"/>
</dbReference>
<dbReference type="InterPro" id="IPR045294">
    <property type="entry name" value="Complex1_LYR_LYRM1"/>
</dbReference>
<dbReference type="InterPro" id="IPR040330">
    <property type="entry name" value="LYRM1"/>
</dbReference>
<dbReference type="PANTHER" id="PTHR14273">
    <property type="entry name" value="LYR MOTIF-CONTAINING PROTEIN 1"/>
    <property type="match status" value="1"/>
</dbReference>
<dbReference type="PANTHER" id="PTHR14273:SF0">
    <property type="entry name" value="LYR MOTIF-CONTAINING PROTEIN 1"/>
    <property type="match status" value="1"/>
</dbReference>
<dbReference type="Pfam" id="PF05347">
    <property type="entry name" value="Complex1_LYR"/>
    <property type="match status" value="1"/>
</dbReference>
<accession>Q6DGP7</accession>
<feature type="chain" id="PRO_0000370327" description="LYR motif containing protein 1">
    <location>
        <begin position="1"/>
        <end position="118"/>
    </location>
</feature>
<feature type="region of interest" description="Disordered" evidence="1">
    <location>
        <begin position="91"/>
        <end position="118"/>
    </location>
</feature>
<feature type="compositionally biased region" description="Basic residues" evidence="1">
    <location>
        <begin position="93"/>
        <end position="107"/>
    </location>
</feature>
<sequence length="118" mass="13965">MSRANVLSLYRRVLRIARSWKAQSSIPKDTDTEKKYITQEARTLFRQNQQITDPESIQRCMEECEARIEIGLHYRNPYPRPTYLPPMGLATQKGRKLRAQQRLRKQAKPVYLQSQDET</sequence>